<sequence>MLPSQSPAIFTVSRLNQTVRLLLEHEIGQVWISGEISNFTQPASGHWYFTLKDDNAQVRCAMFRNSNRRVTFRPQHGQQVLVRANITLYEPRGDYQIIVESMQPAGEGLLQQKYEQLKAKLQAEGLFDQQLKKPLPSPAHCVGVITSKTGAALHDILHVLKRRDPSLPVIIYPTAVQGDDAPGQIVRAIELANKRNECDVLIVGRGGGSLEDLWSFNDERVARAIFASRIPVVSAVGHETDVTIADFIADLRAPTPSAAAEMVSRNQQELLRQIQSVQQRLGMAMDYFLANRTRRLTLLHHRLQQQHPQLRLARQQTALERLQQRMNLAIDSQIKRTNKRQVRLLQRLNQQNPQPRIHRVQSRIQHLEHRLAEHVHSRLSAMRERFGNAVTHLEAVSPLSTLARGYSVTTVTDGKVLKKVKQVKTGDVMTTRLEDGWVKSEVKGITSAKRAQKKKPD</sequence>
<feature type="chain" id="PRO_1000200670" description="Exodeoxyribonuclease 7 large subunit">
    <location>
        <begin position="1"/>
        <end position="457"/>
    </location>
</feature>
<proteinExistence type="inferred from homology"/>
<comment type="function">
    <text evidence="1">Bidirectionally degrades single-stranded DNA into large acid-insoluble oligonucleotides, which are then degraded further into small acid-soluble oligonucleotides.</text>
</comment>
<comment type="catalytic activity">
    <reaction evidence="1">
        <text>Exonucleolytic cleavage in either 5'- to 3'- or 3'- to 5'-direction to yield nucleoside 5'-phosphates.</text>
        <dbReference type="EC" id="3.1.11.6"/>
    </reaction>
</comment>
<comment type="subunit">
    <text evidence="1">Heterooligomer composed of large and small subunits.</text>
</comment>
<comment type="subcellular location">
    <subcellularLocation>
        <location evidence="1">Cytoplasm</location>
    </subcellularLocation>
</comment>
<comment type="similarity">
    <text evidence="1">Belongs to the XseA family.</text>
</comment>
<keyword id="KW-0963">Cytoplasm</keyword>
<keyword id="KW-0269">Exonuclease</keyword>
<keyword id="KW-0378">Hydrolase</keyword>
<keyword id="KW-0540">Nuclease</keyword>
<keyword id="KW-1185">Reference proteome</keyword>
<evidence type="ECO:0000255" key="1">
    <source>
        <dbReference type="HAMAP-Rule" id="MF_00378"/>
    </source>
</evidence>
<gene>
    <name evidence="1" type="primary">xseA</name>
    <name type="ordered locus">E2348C_2784</name>
</gene>
<accession>B7UGU7</accession>
<dbReference type="EC" id="3.1.11.6" evidence="1"/>
<dbReference type="EMBL" id="FM180568">
    <property type="protein sequence ID" value="CAS10332.1"/>
    <property type="molecule type" value="Genomic_DNA"/>
</dbReference>
<dbReference type="RefSeq" id="WP_000937862.1">
    <property type="nucleotide sequence ID" value="NC_011601.1"/>
</dbReference>
<dbReference type="SMR" id="B7UGU7"/>
<dbReference type="KEGG" id="ecg:E2348C_2784"/>
<dbReference type="HOGENOM" id="CLU_023625_3_1_6"/>
<dbReference type="Proteomes" id="UP000008205">
    <property type="component" value="Chromosome"/>
</dbReference>
<dbReference type="GO" id="GO:0005737">
    <property type="term" value="C:cytoplasm"/>
    <property type="evidence" value="ECO:0007669"/>
    <property type="project" value="UniProtKB-SubCell"/>
</dbReference>
<dbReference type="GO" id="GO:0009318">
    <property type="term" value="C:exodeoxyribonuclease VII complex"/>
    <property type="evidence" value="ECO:0007669"/>
    <property type="project" value="InterPro"/>
</dbReference>
<dbReference type="GO" id="GO:0008855">
    <property type="term" value="F:exodeoxyribonuclease VII activity"/>
    <property type="evidence" value="ECO:0007669"/>
    <property type="project" value="UniProtKB-UniRule"/>
</dbReference>
<dbReference type="GO" id="GO:0003676">
    <property type="term" value="F:nucleic acid binding"/>
    <property type="evidence" value="ECO:0007669"/>
    <property type="project" value="InterPro"/>
</dbReference>
<dbReference type="GO" id="GO:0006308">
    <property type="term" value="P:DNA catabolic process"/>
    <property type="evidence" value="ECO:0007669"/>
    <property type="project" value="UniProtKB-UniRule"/>
</dbReference>
<dbReference type="CDD" id="cd04489">
    <property type="entry name" value="ExoVII_LU_OBF"/>
    <property type="match status" value="1"/>
</dbReference>
<dbReference type="HAMAP" id="MF_00378">
    <property type="entry name" value="Exonuc_7_L"/>
    <property type="match status" value="1"/>
</dbReference>
<dbReference type="InterPro" id="IPR003753">
    <property type="entry name" value="Exonuc_VII_L"/>
</dbReference>
<dbReference type="InterPro" id="IPR020579">
    <property type="entry name" value="Exonuc_VII_lsu_C"/>
</dbReference>
<dbReference type="InterPro" id="IPR025824">
    <property type="entry name" value="OB-fold_nuc-bd_dom"/>
</dbReference>
<dbReference type="NCBIfam" id="TIGR00237">
    <property type="entry name" value="xseA"/>
    <property type="match status" value="1"/>
</dbReference>
<dbReference type="PANTHER" id="PTHR30008">
    <property type="entry name" value="EXODEOXYRIBONUCLEASE 7 LARGE SUBUNIT"/>
    <property type="match status" value="1"/>
</dbReference>
<dbReference type="PANTHER" id="PTHR30008:SF0">
    <property type="entry name" value="EXODEOXYRIBONUCLEASE 7 LARGE SUBUNIT"/>
    <property type="match status" value="1"/>
</dbReference>
<dbReference type="Pfam" id="PF02601">
    <property type="entry name" value="Exonuc_VII_L"/>
    <property type="match status" value="1"/>
</dbReference>
<dbReference type="Pfam" id="PF13742">
    <property type="entry name" value="tRNA_anti_2"/>
    <property type="match status" value="1"/>
</dbReference>
<name>EX7L_ECO27</name>
<reference key="1">
    <citation type="journal article" date="2009" name="J. Bacteriol.">
        <title>Complete genome sequence and comparative genome analysis of enteropathogenic Escherichia coli O127:H6 strain E2348/69.</title>
        <authorList>
            <person name="Iguchi A."/>
            <person name="Thomson N.R."/>
            <person name="Ogura Y."/>
            <person name="Saunders D."/>
            <person name="Ooka T."/>
            <person name="Henderson I.R."/>
            <person name="Harris D."/>
            <person name="Asadulghani M."/>
            <person name="Kurokawa K."/>
            <person name="Dean P."/>
            <person name="Kenny B."/>
            <person name="Quail M.A."/>
            <person name="Thurston S."/>
            <person name="Dougan G."/>
            <person name="Hayashi T."/>
            <person name="Parkhill J."/>
            <person name="Frankel G."/>
        </authorList>
    </citation>
    <scope>NUCLEOTIDE SEQUENCE [LARGE SCALE GENOMIC DNA]</scope>
    <source>
        <strain>E2348/69 / EPEC</strain>
    </source>
</reference>
<protein>
    <recommendedName>
        <fullName evidence="1">Exodeoxyribonuclease 7 large subunit</fullName>
        <ecNumber evidence="1">3.1.11.6</ecNumber>
    </recommendedName>
    <alternativeName>
        <fullName evidence="1">Exodeoxyribonuclease VII large subunit</fullName>
        <shortName evidence="1">Exonuclease VII large subunit</shortName>
    </alternativeName>
</protein>
<organism>
    <name type="scientific">Escherichia coli O127:H6 (strain E2348/69 / EPEC)</name>
    <dbReference type="NCBI Taxonomy" id="574521"/>
    <lineage>
        <taxon>Bacteria</taxon>
        <taxon>Pseudomonadati</taxon>
        <taxon>Pseudomonadota</taxon>
        <taxon>Gammaproteobacteria</taxon>
        <taxon>Enterobacterales</taxon>
        <taxon>Enterobacteriaceae</taxon>
        <taxon>Escherichia</taxon>
    </lineage>
</organism>